<proteinExistence type="inferred from homology"/>
<evidence type="ECO:0000255" key="1"/>
<evidence type="ECO:0000255" key="2">
    <source>
        <dbReference type="HAMAP-Rule" id="MF_01654"/>
    </source>
</evidence>
<name>MHPC_PSESP</name>
<sequence length="283" mass="31032">MSAITEAGSSKFIDVTEGEINGSIHVNDAGNGDEVVVMFHGSGPGASGWSNFHRNVDAFVDAGYRVLLIDSPGFNKSYPIVTKSRDGAYAQAAKGVMDKLGIKRAHMIGNSMGGATAMRMAVDYPEMVGKLVMMGGGSVGGSTTTPMPTEGLKLLQGLYRNPSMENLRKMLDIFVYAPSTLTEELINGRFENMMRRPEHLTNFVESLKASGGRANYAHLLPTLTMPTMIIWGRDDRFVPLDLGLRMLWGMPDAELHVFSKCGHWAQWEHADKFNQLVLNFLAR</sequence>
<organism>
    <name type="scientific">Pseudomonas sp</name>
    <dbReference type="NCBI Taxonomy" id="306"/>
    <lineage>
        <taxon>Bacteria</taxon>
        <taxon>Pseudomonadati</taxon>
        <taxon>Pseudomonadota</taxon>
        <taxon>Gammaproteobacteria</taxon>
        <taxon>Pseudomonadales</taxon>
        <taxon>Pseudomonadaceae</taxon>
        <taxon>Pseudomonas</taxon>
    </lineage>
</organism>
<reference key="1">
    <citation type="journal article" date="1996" name="Appl. Environ. Microbiol.">
        <title>Genetic structures of the genes encoding 2,3-dihydroxybiphenyl 1,2-dioxygenase and 2-hydroxy-6-oxo-6-phenylhexa-2,4-dienoic acid hydrolase from biphenyl- and 4-chlorobiphenyl-degrading Pseudomonas sp. strain DJ-12.</title>
        <authorList>
            <person name="Kim E."/>
            <person name="Kim Y."/>
            <person name="Kim C.K."/>
        </authorList>
    </citation>
    <scope>NUCLEOTIDE SEQUENCE [GENOMIC DNA]</scope>
</reference>
<keyword id="KW-0058">Aromatic hydrocarbons catabolism</keyword>
<keyword id="KW-0378">Hydrolase</keyword>
<protein>
    <recommendedName>
        <fullName evidence="2">2-hydroxy-6-oxononadienedioate/2-hydroxy-6-oxononatrienedioate hydrolase</fullName>
        <ecNumber evidence="2">3.7.1.14</ecNumber>
    </recommendedName>
    <alternativeName>
        <fullName evidence="2">2-hydroxy-6-ketonona-2,4-diene-1,9-dioic acid 5,6-hydrolase</fullName>
    </alternativeName>
    <alternativeName>
        <fullName evidence="2">2-hydroxy-6-oxonona-2,4,7-triene-1,9-dioic acid 5,6-hydrolase</fullName>
    </alternativeName>
    <alternativeName>
        <fullName evidence="2">2-hydroxy-6-oxonona-2,4-diene-1,9-dioic acid 5,6-hydrolase</fullName>
    </alternativeName>
</protein>
<comment type="function">
    <text evidence="2">Catalyzes the cleavage of the C5-C6 bond of 2-hydroxy-6-oxononadienedioate and 2-hydroxy-6-oxononatrienedioate, a dienol ring fission product of the bacterial meta-cleavage pathway for degradation of phenylpropionic acid.</text>
</comment>
<comment type="catalytic activity">
    <reaction evidence="2">
        <text>(2Z,4E)-2-hydroxy-6-oxonona-2,4-dienedioate + H2O = (2Z)-2-hydroxypenta-2,4-dienoate + succinate + H(+)</text>
        <dbReference type="Rhea" id="RHEA:34187"/>
        <dbReference type="ChEBI" id="CHEBI:15377"/>
        <dbReference type="ChEBI" id="CHEBI:15378"/>
        <dbReference type="ChEBI" id="CHEBI:30031"/>
        <dbReference type="ChEBI" id="CHEBI:66887"/>
        <dbReference type="ChEBI" id="CHEBI:67152"/>
        <dbReference type="EC" id="3.7.1.14"/>
    </reaction>
</comment>
<comment type="catalytic activity">
    <reaction evidence="2">
        <text>(2Z,4E,7E)-2-hydroxy-6-oxonona-2,4,7-trienedioate + H2O = (2Z)-2-hydroxypenta-2,4-dienoate + fumarate + H(+)</text>
        <dbReference type="Rhea" id="RHEA:34191"/>
        <dbReference type="ChEBI" id="CHEBI:15377"/>
        <dbReference type="ChEBI" id="CHEBI:15378"/>
        <dbReference type="ChEBI" id="CHEBI:29806"/>
        <dbReference type="ChEBI" id="CHEBI:66888"/>
        <dbReference type="ChEBI" id="CHEBI:67152"/>
        <dbReference type="EC" id="3.7.1.14"/>
    </reaction>
</comment>
<comment type="pathway">
    <text evidence="2">Aromatic compound metabolism; 3-phenylpropanoate degradation.</text>
</comment>
<comment type="subunit">
    <text evidence="2">Homodimer.</text>
</comment>
<comment type="similarity">
    <text evidence="2">Belongs to the AB hydrolase superfamily. MhpC family.</text>
</comment>
<feature type="chain" id="PRO_0000337786" description="2-hydroxy-6-oxononadienedioate/2-hydroxy-6-oxononatrienedioate hydrolase">
    <location>
        <begin position="1"/>
        <end position="283"/>
    </location>
</feature>
<feature type="domain" description="AB hydrolase-1" evidence="1">
    <location>
        <begin position="35"/>
        <end position="269"/>
    </location>
</feature>
<feature type="active site" description="Proton acceptor" evidence="2">
    <location>
        <position position="263"/>
    </location>
</feature>
<feature type="site" description="Transition state stabilizer" evidence="2">
    <location>
        <position position="111"/>
    </location>
</feature>
<feature type="site" description="Catalytic role in ketonization of the dienol substrate (substrate destabilization)" evidence="2">
    <location>
        <position position="189"/>
    </location>
</feature>
<gene>
    <name evidence="2" type="primary">mhpC</name>
    <name type="synonym">pcbD</name>
</gene>
<dbReference type="EC" id="3.7.1.14" evidence="2"/>
<dbReference type="EMBL" id="D44550">
    <property type="protein sequence ID" value="BAA07955.1"/>
    <property type="molecule type" value="Genomic_DNA"/>
</dbReference>
<dbReference type="SMR" id="Q52532"/>
<dbReference type="ESTHER" id="psesp-pcbD">
    <property type="family name" value="Carbon-carbon_bond_hydrolase"/>
</dbReference>
<dbReference type="MEROPS" id="S33.016"/>
<dbReference type="UniPathway" id="UPA00714"/>
<dbReference type="GO" id="GO:0005737">
    <property type="term" value="C:cytoplasm"/>
    <property type="evidence" value="ECO:0007669"/>
    <property type="project" value="InterPro"/>
</dbReference>
<dbReference type="GO" id="GO:0016020">
    <property type="term" value="C:membrane"/>
    <property type="evidence" value="ECO:0007669"/>
    <property type="project" value="TreeGrafter"/>
</dbReference>
<dbReference type="GO" id="GO:0052823">
    <property type="term" value="F:2-hydroxy-6-oxonona-2,4,7-trienedioate hydrolase activity"/>
    <property type="evidence" value="ECO:0007669"/>
    <property type="project" value="RHEA"/>
</dbReference>
<dbReference type="GO" id="GO:0018771">
    <property type="term" value="F:2-hydroxy-6-oxonona-2,4-dienedioate hydrolase activity"/>
    <property type="evidence" value="ECO:0007669"/>
    <property type="project" value="UniProtKB-UniRule"/>
</dbReference>
<dbReference type="GO" id="GO:0047372">
    <property type="term" value="F:monoacylglycerol lipase activity"/>
    <property type="evidence" value="ECO:0007669"/>
    <property type="project" value="TreeGrafter"/>
</dbReference>
<dbReference type="GO" id="GO:0042803">
    <property type="term" value="F:protein homodimerization activity"/>
    <property type="evidence" value="ECO:0007669"/>
    <property type="project" value="InterPro"/>
</dbReference>
<dbReference type="GO" id="GO:0019380">
    <property type="term" value="P:3-phenylpropionate catabolic process"/>
    <property type="evidence" value="ECO:0007669"/>
    <property type="project" value="UniProtKB-UniRule"/>
</dbReference>
<dbReference type="GO" id="GO:0046464">
    <property type="term" value="P:acylglycerol catabolic process"/>
    <property type="evidence" value="ECO:0007669"/>
    <property type="project" value="TreeGrafter"/>
</dbReference>
<dbReference type="Gene3D" id="3.40.50.1820">
    <property type="entry name" value="alpha/beta hydrolase"/>
    <property type="match status" value="1"/>
</dbReference>
<dbReference type="HAMAP" id="MF_01654">
    <property type="entry name" value="MhpC"/>
    <property type="match status" value="1"/>
</dbReference>
<dbReference type="InterPro" id="IPR000073">
    <property type="entry name" value="AB_hydrolase_1"/>
</dbReference>
<dbReference type="InterPro" id="IPR029058">
    <property type="entry name" value="AB_hydrolase_fold"/>
</dbReference>
<dbReference type="InterPro" id="IPR050266">
    <property type="entry name" value="AB_hydrolase_sf"/>
</dbReference>
<dbReference type="InterPro" id="IPR023791">
    <property type="entry name" value="MhpC_alpha/beta_hydrolase"/>
</dbReference>
<dbReference type="PANTHER" id="PTHR43798">
    <property type="entry name" value="MONOACYLGLYCEROL LIPASE"/>
    <property type="match status" value="1"/>
</dbReference>
<dbReference type="PANTHER" id="PTHR43798:SF5">
    <property type="entry name" value="MONOACYLGLYCEROL LIPASE ABHD6"/>
    <property type="match status" value="1"/>
</dbReference>
<dbReference type="Pfam" id="PF00561">
    <property type="entry name" value="Abhydrolase_1"/>
    <property type="match status" value="1"/>
</dbReference>
<dbReference type="PRINTS" id="PR00111">
    <property type="entry name" value="ABHYDROLASE"/>
</dbReference>
<dbReference type="SUPFAM" id="SSF53474">
    <property type="entry name" value="alpha/beta-Hydrolases"/>
    <property type="match status" value="1"/>
</dbReference>
<accession>Q52532</accession>